<reference key="1">
    <citation type="journal article" date="2007" name="Proc. Natl. Acad. Sci. U.S.A.">
        <title>Deep-sea vent epsilon-proteobacterial genomes provide insights into emergence of pathogens.</title>
        <authorList>
            <person name="Nakagawa S."/>
            <person name="Takaki Y."/>
            <person name="Shimamura S."/>
            <person name="Reysenbach A.-L."/>
            <person name="Takai K."/>
            <person name="Horikoshi K."/>
        </authorList>
    </citation>
    <scope>NUCLEOTIDE SEQUENCE [LARGE SCALE GENOMIC DNA]</scope>
    <source>
        <strain>NBC37-1</strain>
    </source>
</reference>
<dbReference type="EC" id="3.4.23.36" evidence="1"/>
<dbReference type="EMBL" id="AP009179">
    <property type="protein sequence ID" value="BAF71026.1"/>
    <property type="molecule type" value="Genomic_DNA"/>
</dbReference>
<dbReference type="RefSeq" id="WP_011979759.1">
    <property type="nucleotide sequence ID" value="NC_009663.1"/>
</dbReference>
<dbReference type="SMR" id="A6Q6B7"/>
<dbReference type="STRING" id="387093.SUN_0066"/>
<dbReference type="KEGG" id="sun:SUN_0066"/>
<dbReference type="eggNOG" id="COG0597">
    <property type="taxonomic scope" value="Bacteria"/>
</dbReference>
<dbReference type="HOGENOM" id="CLU_083252_4_3_7"/>
<dbReference type="OrthoDB" id="9810259at2"/>
<dbReference type="UniPathway" id="UPA00665"/>
<dbReference type="Proteomes" id="UP000006378">
    <property type="component" value="Chromosome"/>
</dbReference>
<dbReference type="GO" id="GO:0005886">
    <property type="term" value="C:plasma membrane"/>
    <property type="evidence" value="ECO:0007669"/>
    <property type="project" value="UniProtKB-SubCell"/>
</dbReference>
<dbReference type="GO" id="GO:0004190">
    <property type="term" value="F:aspartic-type endopeptidase activity"/>
    <property type="evidence" value="ECO:0007669"/>
    <property type="project" value="UniProtKB-UniRule"/>
</dbReference>
<dbReference type="GO" id="GO:0006508">
    <property type="term" value="P:proteolysis"/>
    <property type="evidence" value="ECO:0007669"/>
    <property type="project" value="UniProtKB-KW"/>
</dbReference>
<dbReference type="HAMAP" id="MF_00161">
    <property type="entry name" value="LspA"/>
    <property type="match status" value="1"/>
</dbReference>
<dbReference type="InterPro" id="IPR001872">
    <property type="entry name" value="Peptidase_A8"/>
</dbReference>
<dbReference type="NCBIfam" id="TIGR00077">
    <property type="entry name" value="lspA"/>
    <property type="match status" value="1"/>
</dbReference>
<dbReference type="PANTHER" id="PTHR33695">
    <property type="entry name" value="LIPOPROTEIN SIGNAL PEPTIDASE"/>
    <property type="match status" value="1"/>
</dbReference>
<dbReference type="PANTHER" id="PTHR33695:SF1">
    <property type="entry name" value="LIPOPROTEIN SIGNAL PEPTIDASE"/>
    <property type="match status" value="1"/>
</dbReference>
<dbReference type="Pfam" id="PF01252">
    <property type="entry name" value="Peptidase_A8"/>
    <property type="match status" value="1"/>
</dbReference>
<dbReference type="PRINTS" id="PR00781">
    <property type="entry name" value="LIPOSIGPTASE"/>
</dbReference>
<dbReference type="PROSITE" id="PS00855">
    <property type="entry name" value="SPASE_II"/>
    <property type="match status" value="1"/>
</dbReference>
<accession>A6Q6B7</accession>
<sequence>MRSFAIFLLVAIGIFIIDQNIKTLFLEGYYRGGSCIDLSLHFNKGVAFSMFAFIGPYLKWVQALLIGGILYYVLSKGYLKRYAFPAGLLIGGALGNLYDRFVHAGVVDYVAWHCGFNFAVFNFADVAIDLAVAWILIMVYFFPPKA</sequence>
<gene>
    <name evidence="1" type="primary">lspA</name>
    <name type="ordered locus">SUN_0066</name>
</gene>
<protein>
    <recommendedName>
        <fullName evidence="1">Lipoprotein signal peptidase</fullName>
        <ecNumber evidence="1">3.4.23.36</ecNumber>
    </recommendedName>
    <alternativeName>
        <fullName evidence="1">Prolipoprotein signal peptidase</fullName>
    </alternativeName>
    <alternativeName>
        <fullName evidence="1">Signal peptidase II</fullName>
        <shortName evidence="1">SPase II</shortName>
    </alternativeName>
</protein>
<name>LSPA_SULNB</name>
<feature type="chain" id="PRO_1000071548" description="Lipoprotein signal peptidase">
    <location>
        <begin position="1"/>
        <end position="146"/>
    </location>
</feature>
<feature type="transmembrane region" description="Helical" evidence="1">
    <location>
        <begin position="6"/>
        <end position="26"/>
    </location>
</feature>
<feature type="transmembrane region" description="Helical" evidence="1">
    <location>
        <begin position="50"/>
        <end position="70"/>
    </location>
</feature>
<feature type="transmembrane region" description="Helical" evidence="1">
    <location>
        <begin position="82"/>
        <end position="104"/>
    </location>
</feature>
<feature type="transmembrane region" description="Helical" evidence="1">
    <location>
        <begin position="123"/>
        <end position="143"/>
    </location>
</feature>
<feature type="active site" evidence="1">
    <location>
        <position position="108"/>
    </location>
</feature>
<feature type="active site" evidence="1">
    <location>
        <position position="125"/>
    </location>
</feature>
<organism>
    <name type="scientific">Sulfurovum sp. (strain NBC37-1)</name>
    <dbReference type="NCBI Taxonomy" id="387093"/>
    <lineage>
        <taxon>Bacteria</taxon>
        <taxon>Pseudomonadati</taxon>
        <taxon>Campylobacterota</taxon>
        <taxon>Epsilonproteobacteria</taxon>
        <taxon>Campylobacterales</taxon>
        <taxon>Sulfurovaceae</taxon>
        <taxon>Sulfurovum</taxon>
    </lineage>
</organism>
<evidence type="ECO:0000255" key="1">
    <source>
        <dbReference type="HAMAP-Rule" id="MF_00161"/>
    </source>
</evidence>
<keyword id="KW-0064">Aspartyl protease</keyword>
<keyword id="KW-0997">Cell inner membrane</keyword>
<keyword id="KW-1003">Cell membrane</keyword>
<keyword id="KW-0378">Hydrolase</keyword>
<keyword id="KW-0472">Membrane</keyword>
<keyword id="KW-0645">Protease</keyword>
<keyword id="KW-0812">Transmembrane</keyword>
<keyword id="KW-1133">Transmembrane helix</keyword>
<proteinExistence type="inferred from homology"/>
<comment type="function">
    <text evidence="1">This protein specifically catalyzes the removal of signal peptides from prolipoproteins.</text>
</comment>
<comment type="catalytic activity">
    <reaction evidence="1">
        <text>Release of signal peptides from bacterial membrane prolipoproteins. Hydrolyzes -Xaa-Yaa-Zaa-|-(S,diacylglyceryl)Cys-, in which Xaa is hydrophobic (preferably Leu), and Yaa (Ala or Ser) and Zaa (Gly or Ala) have small, neutral side chains.</text>
        <dbReference type="EC" id="3.4.23.36"/>
    </reaction>
</comment>
<comment type="pathway">
    <text evidence="1">Protein modification; lipoprotein biosynthesis (signal peptide cleavage).</text>
</comment>
<comment type="subcellular location">
    <subcellularLocation>
        <location evidence="1">Cell inner membrane</location>
        <topology evidence="1">Multi-pass membrane protein</topology>
    </subcellularLocation>
</comment>
<comment type="similarity">
    <text evidence="1">Belongs to the peptidase A8 family.</text>
</comment>